<reference key="1">
    <citation type="journal article" date="1990" name="Virus Res.">
        <title>A comparative sequence analysis of two human papillomavirus (HPV) types 2a and 57.</title>
        <authorList>
            <person name="Hirsch-Behnam A."/>
            <person name="Delius H."/>
            <person name="de Villiers E.M."/>
        </authorList>
    </citation>
    <scope>NUCLEOTIDE SEQUENCE [GENOMIC DNA]</scope>
</reference>
<evidence type="ECO:0000255" key="1">
    <source>
        <dbReference type="HAMAP-Rule" id="MF_04000"/>
    </source>
</evidence>
<evidence type="ECO:0000256" key="2">
    <source>
        <dbReference type="SAM" id="MobiDB-lite"/>
    </source>
</evidence>
<name>VE1_HPV2A</name>
<feature type="chain" id="PRO_0000133098" description="Replication protein E1">
    <location>
        <begin position="1"/>
        <end position="643"/>
    </location>
</feature>
<feature type="domain" description="SF3 helicase" evidence="1">
    <location>
        <begin position="445"/>
        <end position="595"/>
    </location>
</feature>
<feature type="region of interest" description="Disordered" evidence="2">
    <location>
        <begin position="28"/>
        <end position="58"/>
    </location>
</feature>
<feature type="region of interest" description="Disordered" evidence="2">
    <location>
        <begin position="119"/>
        <end position="138"/>
    </location>
</feature>
<feature type="region of interest" description="Disordered" evidence="2">
    <location>
        <begin position="143"/>
        <end position="181"/>
    </location>
</feature>
<feature type="region of interest" description="DNA-binding region" evidence="1">
    <location>
        <begin position="180"/>
        <end position="346"/>
    </location>
</feature>
<feature type="region of interest" description="Disordered" evidence="2">
    <location>
        <begin position="617"/>
        <end position="643"/>
    </location>
</feature>
<feature type="short sequence motif" description="Nuclear localization signal" evidence="1">
    <location>
        <begin position="84"/>
        <end position="86"/>
    </location>
</feature>
<feature type="short sequence motif" description="Nuclear export signal" evidence="1">
    <location>
        <begin position="102"/>
        <end position="111"/>
    </location>
</feature>
<feature type="compositionally biased region" description="Acidic residues" evidence="2">
    <location>
        <begin position="36"/>
        <end position="51"/>
    </location>
</feature>
<feature type="binding site" evidence="1">
    <location>
        <begin position="471"/>
        <end position="478"/>
    </location>
    <ligand>
        <name>ATP</name>
        <dbReference type="ChEBI" id="CHEBI:30616"/>
    </ligand>
</feature>
<feature type="modified residue" description="Phosphoserine; by host" evidence="1">
    <location>
        <position position="90"/>
    </location>
</feature>
<feature type="modified residue" description="Phosphoserine; by host" evidence="1">
    <location>
        <position position="103"/>
    </location>
</feature>
<feature type="cross-link" description="Glycyl lysine isopeptide (Lys-Gly) (interchain with G-Cter in SUMO)" evidence="1">
    <location>
        <position position="552"/>
    </location>
</feature>
<organism>
    <name type="scientific">Human papillomavirus type 2a</name>
    <dbReference type="NCBI Taxonomy" id="10584"/>
    <lineage>
        <taxon>Viruses</taxon>
        <taxon>Monodnaviria</taxon>
        <taxon>Shotokuvirae</taxon>
        <taxon>Cossaviricota</taxon>
        <taxon>Papovaviricetes</taxon>
        <taxon>Zurhausenvirales</taxon>
        <taxon>Papillomaviridae</taxon>
        <taxon>Firstpapillomavirinae</taxon>
        <taxon>Alphapapillomavirus</taxon>
        <taxon>Alphapapillomavirus 4</taxon>
    </lineage>
</organism>
<organismHost>
    <name type="scientific">Homo sapiens</name>
    <name type="common">Human</name>
    <dbReference type="NCBI Taxonomy" id="9606"/>
</organismHost>
<accession>P25481</accession>
<dbReference type="EC" id="5.6.2.4" evidence="1"/>
<dbReference type="EMBL" id="X55964">
    <property type="status" value="NOT_ANNOTATED_CDS"/>
    <property type="molecule type" value="Genomic_DNA"/>
</dbReference>
<dbReference type="PIR" id="S15616">
    <property type="entry name" value="S15616"/>
</dbReference>
<dbReference type="SMR" id="P25481"/>
<dbReference type="Proteomes" id="UP000007710">
    <property type="component" value="Segment"/>
</dbReference>
<dbReference type="GO" id="GO:0042025">
    <property type="term" value="C:host cell nucleus"/>
    <property type="evidence" value="ECO:0007669"/>
    <property type="project" value="UniProtKB-SubCell"/>
</dbReference>
<dbReference type="GO" id="GO:0005524">
    <property type="term" value="F:ATP binding"/>
    <property type="evidence" value="ECO:0007669"/>
    <property type="project" value="UniProtKB-UniRule"/>
</dbReference>
<dbReference type="GO" id="GO:0016887">
    <property type="term" value="F:ATP hydrolysis activity"/>
    <property type="evidence" value="ECO:0007669"/>
    <property type="project" value="RHEA"/>
</dbReference>
<dbReference type="GO" id="GO:0003677">
    <property type="term" value="F:DNA binding"/>
    <property type="evidence" value="ECO:0007669"/>
    <property type="project" value="UniProtKB-UniRule"/>
</dbReference>
<dbReference type="GO" id="GO:0003678">
    <property type="term" value="F:DNA helicase activity"/>
    <property type="evidence" value="ECO:0007669"/>
    <property type="project" value="UniProtKB-UniRule"/>
</dbReference>
<dbReference type="GO" id="GO:0006260">
    <property type="term" value="P:DNA replication"/>
    <property type="evidence" value="ECO:0007669"/>
    <property type="project" value="UniProtKB-UniRule"/>
</dbReference>
<dbReference type="Gene3D" id="3.40.1310.10">
    <property type="match status" value="1"/>
</dbReference>
<dbReference type="Gene3D" id="3.40.50.300">
    <property type="entry name" value="P-loop containing nucleotide triphosphate hydrolases"/>
    <property type="match status" value="1"/>
</dbReference>
<dbReference type="Gene3D" id="1.10.10.510">
    <property type="entry name" value="Zinc finger, large T-antigen D1 domain"/>
    <property type="match status" value="1"/>
</dbReference>
<dbReference type="HAMAP" id="MF_04000">
    <property type="entry name" value="PPV_E1"/>
    <property type="match status" value="1"/>
</dbReference>
<dbReference type="InterPro" id="IPR014015">
    <property type="entry name" value="Helicase_SF3_DNA-vir"/>
</dbReference>
<dbReference type="InterPro" id="IPR027417">
    <property type="entry name" value="P-loop_NTPase"/>
</dbReference>
<dbReference type="InterPro" id="IPR001177">
    <property type="entry name" value="PPV_DNA_helicase_E1_C"/>
</dbReference>
<dbReference type="InterPro" id="IPR014000">
    <property type="entry name" value="PPV_DNA_helicase_E1_N"/>
</dbReference>
<dbReference type="InterPro" id="IPR046832">
    <property type="entry name" value="PPV_E1_DBD"/>
</dbReference>
<dbReference type="InterPro" id="IPR046935">
    <property type="entry name" value="PPV_E1_DBD_sf"/>
</dbReference>
<dbReference type="InterPro" id="IPR016393">
    <property type="entry name" value="Rep_E1_papillomaV"/>
</dbReference>
<dbReference type="InterPro" id="IPR037102">
    <property type="entry name" value="Znf_lg_T-Ag_D1_dom_sf"/>
</dbReference>
<dbReference type="Pfam" id="PF00519">
    <property type="entry name" value="PPV_E1_C"/>
    <property type="match status" value="1"/>
</dbReference>
<dbReference type="Pfam" id="PF20450">
    <property type="entry name" value="PPV_E1_DBD"/>
    <property type="match status" value="1"/>
</dbReference>
<dbReference type="Pfam" id="PF00524">
    <property type="entry name" value="PPV_E1_N"/>
    <property type="match status" value="1"/>
</dbReference>
<dbReference type="PIRSF" id="PIRSF003383">
    <property type="entry name" value="Rep_E1_papillomaV"/>
    <property type="match status" value="1"/>
</dbReference>
<dbReference type="SUPFAM" id="SSF55464">
    <property type="entry name" value="Origin of replication-binding domain, RBD-like"/>
    <property type="match status" value="1"/>
</dbReference>
<dbReference type="SUPFAM" id="SSF52540">
    <property type="entry name" value="P-loop containing nucleoside triphosphate hydrolases"/>
    <property type="match status" value="1"/>
</dbReference>
<dbReference type="PROSITE" id="PS51206">
    <property type="entry name" value="SF3_HELICASE_1"/>
    <property type="match status" value="1"/>
</dbReference>
<comment type="function">
    <text evidence="1">ATP-dependent DNA 3'-5' helicase required for initiation of viral DNA replication. It forms a complex with the viral E2 protein. The E1-E2 complex binds to the replication origin which contains binding sites for both proteins. During the initial step, a dimer of E1 interacts with a dimer of protein E2 leading to a complex that binds the viral origin of replication with high specificity. Then, a second dimer of E1 displaces the E2 dimer in an ATP-dependent manner to form the E1 tetramer. Following this, two E1 monomers are added to each half of the site, which results in the formation of two E1 trimers on the viral ori. Subsequently, two hexamers will be created. The double hexamer acts as a bi-directional helicase machinery and unwinds the viral DNA and then recruits the host DNA polymerase to start replication.</text>
</comment>
<comment type="catalytic activity">
    <reaction evidence="1">
        <text>Couples ATP hydrolysis with the unwinding of duplex DNA by translocating in the 3'-5' direction.</text>
        <dbReference type="EC" id="5.6.2.4"/>
    </reaction>
</comment>
<comment type="catalytic activity">
    <reaction evidence="1">
        <text>ATP + H2O = ADP + phosphate + H(+)</text>
        <dbReference type="Rhea" id="RHEA:13065"/>
        <dbReference type="ChEBI" id="CHEBI:15377"/>
        <dbReference type="ChEBI" id="CHEBI:15378"/>
        <dbReference type="ChEBI" id="CHEBI:30616"/>
        <dbReference type="ChEBI" id="CHEBI:43474"/>
        <dbReference type="ChEBI" id="CHEBI:456216"/>
        <dbReference type="EC" id="5.6.2.4"/>
    </reaction>
</comment>
<comment type="subunit">
    <text evidence="1">Can form hexamers. Interacts with E2 protein; this interaction increases E1 DNA binding specificity. Interacts with host DNA polymerase subunit POLA2. Interacts with host single stranded DNA-binding protein RPA1. Interacts with host TOP1; this interaction stimulates the enzymatic activity of TOP1.</text>
</comment>
<comment type="subcellular location">
    <subcellularLocation>
        <location evidence="1">Host nucleus</location>
    </subcellularLocation>
</comment>
<comment type="PTM">
    <text evidence="1">Phosphorylated.</text>
</comment>
<comment type="PTM">
    <text evidence="1">Sumoylated.</text>
</comment>
<comment type="similarity">
    <text evidence="1">Belongs to the papillomaviridae E1 protein family.</text>
</comment>
<proteinExistence type="inferred from homology"/>
<keyword id="KW-0067">ATP-binding</keyword>
<keyword id="KW-0235">DNA replication</keyword>
<keyword id="KW-0238">DNA-binding</keyword>
<keyword id="KW-0244">Early protein</keyword>
<keyword id="KW-0347">Helicase</keyword>
<keyword id="KW-1048">Host nucleus</keyword>
<keyword id="KW-0378">Hydrolase</keyword>
<keyword id="KW-0413">Isomerase</keyword>
<keyword id="KW-1017">Isopeptide bond</keyword>
<keyword id="KW-0547">Nucleotide-binding</keyword>
<keyword id="KW-0597">Phosphoprotein</keyword>
<keyword id="KW-0832">Ubl conjugation</keyword>
<protein>
    <recommendedName>
        <fullName evidence="1">Replication protein E1</fullName>
        <ecNumber evidence="1">5.6.2.4</ecNumber>
    </recommendedName>
    <alternativeName>
        <fullName evidence="1">ATP-dependent helicase E1</fullName>
    </alternativeName>
    <alternativeName>
        <fullName evidence="1">DNA 3'-5' helicase E1</fullName>
    </alternativeName>
</protein>
<sequence>MEDSEGTDGTEEDGCRAGGWFHVEAIITHGQRQVSSDEDEDETETGEDLDFIDNRVPGDGQEIPLQLYAQQTAQDDEATVQALKRKFVASPLSACSCIENDLSPRLDAISLNRKSEKAKRRLFETEPPDSGYGNTQMVVGTPEEVTGDEESQGGRPVEDQEEERQGGDGEADLTVHTPQSGTDAAGSVLTLLRSSNLKATLLSKFKDLFGVGFYELVRQFKSSKTACADWVVCAYGVYYAVAEGLKKLIQPHTQYAHIQVQTSSWGMVVFMLLRYNCAKNRDSVSKNMSMLLNIPEKHMLIEPPKLRSTPAALYWYKTAMGNGSEVYGETPEWIVRQTLVGHSMEDEQFRLSVMVQYAYDHDIVEESVLAFEYAQLADVDANAAAFLNSNCQAKYVKDAVTMCRHYKRAEREQMSMSQWITFRGNKVSEEGDWKPIVRFLRHQGVEFVSFLAAFKLFLKGVPKKNCIVFYGPADTGKSYFCMSLLQFLGGAVISYANSSSHFWLQPLSDSKIGLLDDATPQCWSYIDIYLRNLLDGHPVSIDRKHKTLLQLKCPPLMITTNTNPLEEDRWKYLRSRLTVFTFKNPFPFASPGEPLYPINNANWKCFFQRSWSRLDLNSPEEQDDNGNTGEPFRCVPGDVARTV</sequence>
<gene>
    <name evidence="1" type="primary">E1</name>
</gene>